<evidence type="ECO:0000255" key="1">
    <source>
        <dbReference type="HAMAP-Rule" id="MF_00074"/>
    </source>
</evidence>
<gene>
    <name evidence="1" type="primary">rsmG</name>
    <name type="ordered locus">Psyc_1321</name>
</gene>
<keyword id="KW-0963">Cytoplasm</keyword>
<keyword id="KW-0489">Methyltransferase</keyword>
<keyword id="KW-1185">Reference proteome</keyword>
<keyword id="KW-0698">rRNA processing</keyword>
<keyword id="KW-0949">S-adenosyl-L-methionine</keyword>
<keyword id="KW-0808">Transferase</keyword>
<sequence length="238" mass="26029">MSDSTKPSLPSASIGNIHIDPTGFVKLGAQLPTLANILAQAIDELGITLSAQQQRTLLLYLDQLLLWNKAYNLTAITDPVEALIKHVIDCLAIITHLPSGSLLDIGTGAGLPAVIIAICQPERSCTALDSNQKKIRFIKQISSELGLSNMQPIASRIEAHEVSYDVVTSRAFASLIDFVEVAQPRLADNGYLCAMKGKAPSEEERHVLGNDWQFKTIKLNVPRLHDSRHLIELSYKNV</sequence>
<reference key="1">
    <citation type="journal article" date="2010" name="Appl. Environ. Microbiol.">
        <title>The genome sequence of Psychrobacter arcticus 273-4, a psychroactive Siberian permafrost bacterium, reveals mechanisms for adaptation to low-temperature growth.</title>
        <authorList>
            <person name="Ayala-del-Rio H.L."/>
            <person name="Chain P.S."/>
            <person name="Grzymski J.J."/>
            <person name="Ponder M.A."/>
            <person name="Ivanova N."/>
            <person name="Bergholz P.W."/>
            <person name="Di Bartolo G."/>
            <person name="Hauser L."/>
            <person name="Land M."/>
            <person name="Bakermans C."/>
            <person name="Rodrigues D."/>
            <person name="Klappenbach J."/>
            <person name="Zarka D."/>
            <person name="Larimer F."/>
            <person name="Richardson P."/>
            <person name="Murray A."/>
            <person name="Thomashow M."/>
            <person name="Tiedje J.M."/>
        </authorList>
    </citation>
    <scope>NUCLEOTIDE SEQUENCE [LARGE SCALE GENOMIC DNA]</scope>
    <source>
        <strain>DSM 17307 / VKM B-2377 / 273-4</strain>
    </source>
</reference>
<protein>
    <recommendedName>
        <fullName evidence="1">Ribosomal RNA small subunit methyltransferase G</fullName>
        <ecNumber evidence="1">2.1.1.170</ecNumber>
    </recommendedName>
    <alternativeName>
        <fullName evidence="1">16S rRNA 7-methylguanosine methyltransferase</fullName>
        <shortName evidence="1">16S rRNA m7G methyltransferase</shortName>
    </alternativeName>
</protein>
<comment type="function">
    <text evidence="1">Specifically methylates the N7 position of guanine in position 527 of 16S rRNA.</text>
</comment>
<comment type="catalytic activity">
    <reaction evidence="1">
        <text>guanosine(527) in 16S rRNA + S-adenosyl-L-methionine = N(7)-methylguanosine(527) in 16S rRNA + S-adenosyl-L-homocysteine</text>
        <dbReference type="Rhea" id="RHEA:42732"/>
        <dbReference type="Rhea" id="RHEA-COMP:10209"/>
        <dbReference type="Rhea" id="RHEA-COMP:10210"/>
        <dbReference type="ChEBI" id="CHEBI:57856"/>
        <dbReference type="ChEBI" id="CHEBI:59789"/>
        <dbReference type="ChEBI" id="CHEBI:74269"/>
        <dbReference type="ChEBI" id="CHEBI:74480"/>
        <dbReference type="EC" id="2.1.1.170"/>
    </reaction>
</comment>
<comment type="subcellular location">
    <subcellularLocation>
        <location evidence="1">Cytoplasm</location>
    </subcellularLocation>
</comment>
<comment type="similarity">
    <text evidence="1">Belongs to the methyltransferase superfamily. RNA methyltransferase RsmG family.</text>
</comment>
<dbReference type="EC" id="2.1.1.170" evidence="1"/>
<dbReference type="EMBL" id="CP000082">
    <property type="protein sequence ID" value="AAZ19171.1"/>
    <property type="molecule type" value="Genomic_DNA"/>
</dbReference>
<dbReference type="RefSeq" id="WP_011280593.1">
    <property type="nucleotide sequence ID" value="NC_007204.1"/>
</dbReference>
<dbReference type="SMR" id="Q4FS37"/>
<dbReference type="STRING" id="259536.Psyc_1321"/>
<dbReference type="KEGG" id="par:Psyc_1321"/>
<dbReference type="eggNOG" id="COG0357">
    <property type="taxonomic scope" value="Bacteria"/>
</dbReference>
<dbReference type="HOGENOM" id="CLU_065341_2_0_6"/>
<dbReference type="OrthoDB" id="9808773at2"/>
<dbReference type="Proteomes" id="UP000000546">
    <property type="component" value="Chromosome"/>
</dbReference>
<dbReference type="GO" id="GO:0005829">
    <property type="term" value="C:cytosol"/>
    <property type="evidence" value="ECO:0007669"/>
    <property type="project" value="TreeGrafter"/>
</dbReference>
<dbReference type="GO" id="GO:0070043">
    <property type="term" value="F:rRNA (guanine-N7-)-methyltransferase activity"/>
    <property type="evidence" value="ECO:0007669"/>
    <property type="project" value="UniProtKB-UniRule"/>
</dbReference>
<dbReference type="CDD" id="cd02440">
    <property type="entry name" value="AdoMet_MTases"/>
    <property type="match status" value="1"/>
</dbReference>
<dbReference type="Gene3D" id="3.40.50.150">
    <property type="entry name" value="Vaccinia Virus protein VP39"/>
    <property type="match status" value="1"/>
</dbReference>
<dbReference type="HAMAP" id="MF_00074">
    <property type="entry name" value="16SrRNA_methyltr_G"/>
    <property type="match status" value="1"/>
</dbReference>
<dbReference type="InterPro" id="IPR003682">
    <property type="entry name" value="rRNA_ssu_MeTfrase_G"/>
</dbReference>
<dbReference type="InterPro" id="IPR029063">
    <property type="entry name" value="SAM-dependent_MTases_sf"/>
</dbReference>
<dbReference type="NCBIfam" id="TIGR00138">
    <property type="entry name" value="rsmG_gidB"/>
    <property type="match status" value="1"/>
</dbReference>
<dbReference type="PANTHER" id="PTHR31760">
    <property type="entry name" value="S-ADENOSYL-L-METHIONINE-DEPENDENT METHYLTRANSFERASES SUPERFAMILY PROTEIN"/>
    <property type="match status" value="1"/>
</dbReference>
<dbReference type="PANTHER" id="PTHR31760:SF0">
    <property type="entry name" value="S-ADENOSYL-L-METHIONINE-DEPENDENT METHYLTRANSFERASES SUPERFAMILY PROTEIN"/>
    <property type="match status" value="1"/>
</dbReference>
<dbReference type="Pfam" id="PF02527">
    <property type="entry name" value="GidB"/>
    <property type="match status" value="1"/>
</dbReference>
<dbReference type="PIRSF" id="PIRSF003078">
    <property type="entry name" value="GidB"/>
    <property type="match status" value="1"/>
</dbReference>
<dbReference type="SUPFAM" id="SSF53335">
    <property type="entry name" value="S-adenosyl-L-methionine-dependent methyltransferases"/>
    <property type="match status" value="1"/>
</dbReference>
<proteinExistence type="inferred from homology"/>
<organism>
    <name type="scientific">Psychrobacter arcticus (strain DSM 17307 / VKM B-2377 / 273-4)</name>
    <dbReference type="NCBI Taxonomy" id="259536"/>
    <lineage>
        <taxon>Bacteria</taxon>
        <taxon>Pseudomonadati</taxon>
        <taxon>Pseudomonadota</taxon>
        <taxon>Gammaproteobacteria</taxon>
        <taxon>Moraxellales</taxon>
        <taxon>Moraxellaceae</taxon>
        <taxon>Psychrobacter</taxon>
    </lineage>
</organism>
<feature type="chain" id="PRO_0000335403" description="Ribosomal RNA small subunit methyltransferase G">
    <location>
        <begin position="1"/>
        <end position="238"/>
    </location>
</feature>
<feature type="binding site" evidence="1">
    <location>
        <position position="106"/>
    </location>
    <ligand>
        <name>S-adenosyl-L-methionine</name>
        <dbReference type="ChEBI" id="CHEBI:59789"/>
    </ligand>
</feature>
<feature type="binding site" evidence="1">
    <location>
        <position position="111"/>
    </location>
    <ligand>
        <name>S-adenosyl-L-methionine</name>
        <dbReference type="ChEBI" id="CHEBI:59789"/>
    </ligand>
</feature>
<feature type="binding site" evidence="1">
    <location>
        <begin position="157"/>
        <end position="158"/>
    </location>
    <ligand>
        <name>S-adenosyl-L-methionine</name>
        <dbReference type="ChEBI" id="CHEBI:59789"/>
    </ligand>
</feature>
<feature type="binding site" evidence="1">
    <location>
        <position position="170"/>
    </location>
    <ligand>
        <name>S-adenosyl-L-methionine</name>
        <dbReference type="ChEBI" id="CHEBI:59789"/>
    </ligand>
</feature>
<accession>Q4FS37</accession>
<name>RSMG_PSYA2</name>